<gene>
    <name evidence="1" type="primary">yqhA</name>
    <name type="ordered locus">ECIAI39_3498</name>
</gene>
<organism>
    <name type="scientific">Escherichia coli O7:K1 (strain IAI39 / ExPEC)</name>
    <dbReference type="NCBI Taxonomy" id="585057"/>
    <lineage>
        <taxon>Bacteria</taxon>
        <taxon>Pseudomonadati</taxon>
        <taxon>Pseudomonadota</taxon>
        <taxon>Gammaproteobacteria</taxon>
        <taxon>Enterobacterales</taxon>
        <taxon>Enterobacteriaceae</taxon>
        <taxon>Escherichia</taxon>
    </lineage>
</organism>
<keyword id="KW-1003">Cell membrane</keyword>
<keyword id="KW-0472">Membrane</keyword>
<keyword id="KW-0812">Transmembrane</keyword>
<keyword id="KW-1133">Transmembrane helix</keyword>
<sequence length="164" mass="18641">MERFLENAMYASRWLLAPVYFGLSLALVALALKFFQEIIHVLPNIFSMAESDLILVLLSLVDMTLVGGLLVMVMFSGYENFVSQLDISENKEKLNWLGKMDATSLKNKVAASIVAISSIHLLRVFMDAKNVPDNKLMWYVIIHLTFVLSAFVMGYLDRLTRHNH</sequence>
<protein>
    <recommendedName>
        <fullName evidence="1">UPF0114 protein YqhA</fullName>
    </recommendedName>
</protein>
<comment type="subcellular location">
    <subcellularLocation>
        <location evidence="1">Cell membrane</location>
        <topology evidence="1">Multi-pass membrane protein</topology>
    </subcellularLocation>
</comment>
<comment type="similarity">
    <text evidence="1">Belongs to the UPF0114 family.</text>
</comment>
<accession>B7NJ05</accession>
<reference key="1">
    <citation type="journal article" date="2009" name="PLoS Genet.">
        <title>Organised genome dynamics in the Escherichia coli species results in highly diverse adaptive paths.</title>
        <authorList>
            <person name="Touchon M."/>
            <person name="Hoede C."/>
            <person name="Tenaillon O."/>
            <person name="Barbe V."/>
            <person name="Baeriswyl S."/>
            <person name="Bidet P."/>
            <person name="Bingen E."/>
            <person name="Bonacorsi S."/>
            <person name="Bouchier C."/>
            <person name="Bouvet O."/>
            <person name="Calteau A."/>
            <person name="Chiapello H."/>
            <person name="Clermont O."/>
            <person name="Cruveiller S."/>
            <person name="Danchin A."/>
            <person name="Diard M."/>
            <person name="Dossat C."/>
            <person name="Karoui M.E."/>
            <person name="Frapy E."/>
            <person name="Garry L."/>
            <person name="Ghigo J.M."/>
            <person name="Gilles A.M."/>
            <person name="Johnson J."/>
            <person name="Le Bouguenec C."/>
            <person name="Lescat M."/>
            <person name="Mangenot S."/>
            <person name="Martinez-Jehanne V."/>
            <person name="Matic I."/>
            <person name="Nassif X."/>
            <person name="Oztas S."/>
            <person name="Petit M.A."/>
            <person name="Pichon C."/>
            <person name="Rouy Z."/>
            <person name="Ruf C.S."/>
            <person name="Schneider D."/>
            <person name="Tourret J."/>
            <person name="Vacherie B."/>
            <person name="Vallenet D."/>
            <person name="Medigue C."/>
            <person name="Rocha E.P.C."/>
            <person name="Denamur E."/>
        </authorList>
    </citation>
    <scope>NUCLEOTIDE SEQUENCE [LARGE SCALE GENOMIC DNA]</scope>
    <source>
        <strain>IAI39 / ExPEC</strain>
    </source>
</reference>
<proteinExistence type="inferred from homology"/>
<name>YQHA_ECO7I</name>
<dbReference type="EMBL" id="CU928164">
    <property type="protein sequence ID" value="CAR19615.1"/>
    <property type="molecule type" value="Genomic_DNA"/>
</dbReference>
<dbReference type="RefSeq" id="WP_000439331.1">
    <property type="nucleotide sequence ID" value="NC_011750.1"/>
</dbReference>
<dbReference type="RefSeq" id="YP_002409405.1">
    <property type="nucleotide sequence ID" value="NC_011750.1"/>
</dbReference>
<dbReference type="KEGG" id="ect:ECIAI39_3498"/>
<dbReference type="PATRIC" id="fig|585057.6.peg.3627"/>
<dbReference type="HOGENOM" id="CLU_097887_1_1_6"/>
<dbReference type="Proteomes" id="UP000000749">
    <property type="component" value="Chromosome"/>
</dbReference>
<dbReference type="GO" id="GO:0005886">
    <property type="term" value="C:plasma membrane"/>
    <property type="evidence" value="ECO:0007669"/>
    <property type="project" value="UniProtKB-SubCell"/>
</dbReference>
<dbReference type="HAMAP" id="MF_00143">
    <property type="entry name" value="UPF0114"/>
    <property type="match status" value="1"/>
</dbReference>
<dbReference type="InterPro" id="IPR005134">
    <property type="entry name" value="UPF0114"/>
</dbReference>
<dbReference type="InterPro" id="IPR020761">
    <property type="entry name" value="UPF0114_bac"/>
</dbReference>
<dbReference type="NCBIfam" id="TIGR00645">
    <property type="entry name" value="HI0507"/>
    <property type="match status" value="1"/>
</dbReference>
<dbReference type="PANTHER" id="PTHR38596">
    <property type="entry name" value="UPF0114 PROTEIN YQHA"/>
    <property type="match status" value="1"/>
</dbReference>
<dbReference type="PANTHER" id="PTHR38596:SF1">
    <property type="entry name" value="UPF0114 PROTEIN YQHA"/>
    <property type="match status" value="1"/>
</dbReference>
<dbReference type="Pfam" id="PF03350">
    <property type="entry name" value="UPF0114"/>
    <property type="match status" value="1"/>
</dbReference>
<feature type="chain" id="PRO_1000197572" description="UPF0114 protein YqhA">
    <location>
        <begin position="1"/>
        <end position="164"/>
    </location>
</feature>
<feature type="transmembrane region" description="Helical" evidence="1">
    <location>
        <begin position="15"/>
        <end position="35"/>
    </location>
</feature>
<feature type="transmembrane region" description="Helical" evidence="1">
    <location>
        <begin position="53"/>
        <end position="73"/>
    </location>
</feature>
<feature type="transmembrane region" description="Helical" evidence="1">
    <location>
        <begin position="136"/>
        <end position="156"/>
    </location>
</feature>
<evidence type="ECO:0000255" key="1">
    <source>
        <dbReference type="HAMAP-Rule" id="MF_00143"/>
    </source>
</evidence>